<evidence type="ECO:0000255" key="1"/>
<evidence type="ECO:0000256" key="2">
    <source>
        <dbReference type="SAM" id="MobiDB-lite"/>
    </source>
</evidence>
<evidence type="ECO:0000305" key="3"/>
<keyword id="KW-0150">Chloroplast</keyword>
<keyword id="KW-0472">Membrane</keyword>
<keyword id="KW-0934">Plastid</keyword>
<keyword id="KW-0793">Thylakoid</keyword>
<keyword id="KW-0809">Transit peptide</keyword>
<keyword id="KW-0812">Transmembrane</keyword>
<keyword id="KW-1133">Transmembrane helix</keyword>
<protein>
    <recommendedName>
        <fullName>Desiccation stress protein DSP-22, chloroplastic</fullName>
    </recommendedName>
</protein>
<sequence>MASSTCYATIPAMSCRGQSTITRFGPNNLFLGKQSYELPLMRRNAKFTVRSMREDNEKEEQQQQKQQQTHDGGPDLTPNRTEVTTKRTVDLFSFDGLAPERINGRSAMIGFVAAVGVELATGRDVFSQVFNGGVMWFLLTSAVLVLATLIPIYRGLSPEAKNNGFWNSDAEIWNGRFAMIGLVALAFTEYVKGGPLINV</sequence>
<name>DS22_CRAPL</name>
<comment type="function">
    <text>Possibly exerts a protective role during water loss.</text>
</comment>
<comment type="subcellular location">
    <subcellularLocation>
        <location>Plastid</location>
        <location>Chloroplast thylakoid membrane</location>
        <topology>Multi-pass membrane protein</topology>
    </subcellularLocation>
</comment>
<comment type="tissue specificity">
    <text>Preferentially localized in the chloroplast-rich palisade parenchyma cells, in extracts of desiccated leaves, in seeds, but not in roots or untreated leaves.</text>
</comment>
<comment type="induction">
    <text>By light, ABA and desiccation.</text>
</comment>
<comment type="similarity">
    <text evidence="3">Belongs to the ELIP/psbS family.</text>
</comment>
<feature type="transit peptide" description="Chloroplast" evidence="1">
    <location>
        <begin position="1"/>
        <end position="52"/>
    </location>
</feature>
<feature type="chain" id="PRO_0000007810" description="Desiccation stress protein DSP-22, chloroplastic">
    <location>
        <begin position="53"/>
        <end position="199"/>
    </location>
</feature>
<feature type="transmembrane region" description="Helical" evidence="1">
    <location>
        <begin position="130"/>
        <end position="152"/>
    </location>
</feature>
<feature type="transmembrane region" description="Helical" evidence="1">
    <location>
        <begin position="172"/>
        <end position="191"/>
    </location>
</feature>
<feature type="region of interest" description="Disordered" evidence="2">
    <location>
        <begin position="53"/>
        <end position="82"/>
    </location>
</feature>
<feature type="compositionally biased region" description="Basic and acidic residues" evidence="2">
    <location>
        <begin position="53"/>
        <end position="62"/>
    </location>
</feature>
<organism>
    <name type="scientific">Craterostigma plantagineum</name>
    <name type="common">Blue gem</name>
    <name type="synonym">Torenia plantagineum</name>
    <dbReference type="NCBI Taxonomy" id="4153"/>
    <lineage>
        <taxon>Eukaryota</taxon>
        <taxon>Viridiplantae</taxon>
        <taxon>Streptophyta</taxon>
        <taxon>Embryophyta</taxon>
        <taxon>Tracheophyta</taxon>
        <taxon>Spermatophyta</taxon>
        <taxon>Magnoliopsida</taxon>
        <taxon>eudicotyledons</taxon>
        <taxon>Gunneridae</taxon>
        <taxon>Pentapetalae</taxon>
        <taxon>asterids</taxon>
        <taxon>lamiids</taxon>
        <taxon>Lamiales</taxon>
        <taxon>Linderniaceae</taxon>
        <taxon>Craterostigma</taxon>
    </lineage>
</organism>
<gene>
    <name type="primary">DSP-22</name>
</gene>
<accession>Q01931</accession>
<dbReference type="EMBL" id="X66598">
    <property type="protein sequence ID" value="CAA47164.1"/>
    <property type="molecule type" value="mRNA"/>
</dbReference>
<dbReference type="PIR" id="S23379">
    <property type="entry name" value="S23379"/>
</dbReference>
<dbReference type="SMR" id="Q01931"/>
<dbReference type="GO" id="GO:0009535">
    <property type="term" value="C:chloroplast thylakoid membrane"/>
    <property type="evidence" value="ECO:0007669"/>
    <property type="project" value="UniProtKB-SubCell"/>
</dbReference>
<dbReference type="InterPro" id="IPR022796">
    <property type="entry name" value="Chloroa_b-bind"/>
</dbReference>
<dbReference type="PANTHER" id="PTHR14154">
    <property type="entry name" value="UPF0041 BRAIN PROTEIN 44-RELATED"/>
    <property type="match status" value="1"/>
</dbReference>
<dbReference type="Pfam" id="PF00504">
    <property type="entry name" value="Chloroa_b-bind"/>
    <property type="match status" value="1"/>
</dbReference>
<dbReference type="SUPFAM" id="SSF103511">
    <property type="entry name" value="Chlorophyll a-b binding protein"/>
    <property type="match status" value="1"/>
</dbReference>
<reference key="1">
    <citation type="journal article" date="1992" name="EMBO J.">
        <title>A desiccation-related Elip-like gene from the resurrection plant Craterostigma plantagineum is regulated by light and ABA.</title>
        <authorList>
            <person name="Bartels D."/>
            <person name="Hanke D."/>
            <person name="Schneider C."/>
            <person name="Michel K."/>
            <person name="Salamini F."/>
        </authorList>
    </citation>
    <scope>NUCLEOTIDE SEQUENCE [MRNA]</scope>
    <source>
        <tissue>Leaf</tissue>
    </source>
</reference>
<proteinExistence type="evidence at transcript level"/>